<proteinExistence type="inferred from homology"/>
<organism>
    <name type="scientific">Treponema pallidum (strain Nichols)</name>
    <dbReference type="NCBI Taxonomy" id="243276"/>
    <lineage>
        <taxon>Bacteria</taxon>
        <taxon>Pseudomonadati</taxon>
        <taxon>Spirochaetota</taxon>
        <taxon>Spirochaetia</taxon>
        <taxon>Spirochaetales</taxon>
        <taxon>Treponemataceae</taxon>
        <taxon>Treponema</taxon>
    </lineage>
</organism>
<accession>O83878</accession>
<reference key="1">
    <citation type="journal article" date="1998" name="Science">
        <title>Complete genome sequence of Treponema pallidum, the syphilis spirochete.</title>
        <authorList>
            <person name="Fraser C.M."/>
            <person name="Norris S.J."/>
            <person name="Weinstock G.M."/>
            <person name="White O."/>
            <person name="Sutton G.G."/>
            <person name="Dodson R.J."/>
            <person name="Gwinn M.L."/>
            <person name="Hickey E.K."/>
            <person name="Clayton R.A."/>
            <person name="Ketchum K.A."/>
            <person name="Sodergren E."/>
            <person name="Hardham J.M."/>
            <person name="McLeod M.P."/>
            <person name="Salzberg S.L."/>
            <person name="Peterson J.D."/>
            <person name="Khalak H.G."/>
            <person name="Richardson D.L."/>
            <person name="Howell J.K."/>
            <person name="Chidambaram M."/>
            <person name="Utterback T.R."/>
            <person name="McDonald L.A."/>
            <person name="Artiach P."/>
            <person name="Bowman C."/>
            <person name="Cotton M.D."/>
            <person name="Fujii C."/>
            <person name="Garland S.A."/>
            <person name="Hatch B."/>
            <person name="Horst K."/>
            <person name="Roberts K.M."/>
            <person name="Sandusky M."/>
            <person name="Weidman J.F."/>
            <person name="Smith H.O."/>
            <person name="Venter J.C."/>
        </authorList>
    </citation>
    <scope>NUCLEOTIDE SEQUENCE [LARGE SCALE GENOMIC DNA]</scope>
    <source>
        <strain>Nichols</strain>
    </source>
</reference>
<evidence type="ECO:0000250" key="1"/>
<evidence type="ECO:0000305" key="2"/>
<keyword id="KW-0963">Cytoplasm</keyword>
<keyword id="KW-0489">Methyltransferase</keyword>
<keyword id="KW-1185">Reference proteome</keyword>
<keyword id="KW-0949">S-adenosyl-L-methionine</keyword>
<keyword id="KW-0808">Transferase</keyword>
<keyword id="KW-0819">tRNA processing</keyword>
<gene>
    <name type="primary">trmD</name>
    <name type="ordered locus">TP_0908</name>
</gene>
<sequence>MNIDVLTLFPAIPRVYFSTSIMARAVSDGIIHYNIVNIRDFAHDKHKHCDAPPYGGGPGMLMRSEPLGKALDSVDAPKKRVVYVTPSGKLFEQGYARSLAQERALVLICGRYEGIDQRIIDEYVDDEVCIGNYVLSSGEIAALVLIDAVSRCVSGVIRHESLEEESFVNSLVEYPQYTRPRCFHNRDVPPVLLSGHHAHIRTWRLARQIEKTRRNRPDLLSAARASAAWTQEAESLLKELDYELPPHPTN</sequence>
<name>TRMD_TREPA</name>
<feature type="chain" id="PRO_0000060488" description="tRNA (guanine-N(1)-)-methyltransferase">
    <location>
        <begin position="1"/>
        <end position="250"/>
    </location>
</feature>
<feature type="binding site" evidence="1">
    <location>
        <position position="110"/>
    </location>
    <ligand>
        <name>S-adenosyl-L-methionine</name>
        <dbReference type="ChEBI" id="CHEBI:59789"/>
    </ligand>
</feature>
<feature type="binding site" evidence="1">
    <location>
        <begin position="130"/>
        <end position="135"/>
    </location>
    <ligand>
        <name>S-adenosyl-L-methionine</name>
        <dbReference type="ChEBI" id="CHEBI:59789"/>
    </ligand>
</feature>
<dbReference type="EC" id="2.1.1.228"/>
<dbReference type="EMBL" id="AE000520">
    <property type="protein sequence ID" value="AAC65860.1"/>
    <property type="molecule type" value="Genomic_DNA"/>
</dbReference>
<dbReference type="PIR" id="A71268">
    <property type="entry name" value="A71268"/>
</dbReference>
<dbReference type="RefSeq" id="WP_010882351.1">
    <property type="nucleotide sequence ID" value="NC_021490.2"/>
</dbReference>
<dbReference type="SMR" id="O83878"/>
<dbReference type="STRING" id="243276.TP_0908"/>
<dbReference type="EnsemblBacteria" id="AAC65860">
    <property type="protein sequence ID" value="AAC65860"/>
    <property type="gene ID" value="TP_0908"/>
</dbReference>
<dbReference type="GeneID" id="93876658"/>
<dbReference type="KEGG" id="tpa:TP_0908"/>
<dbReference type="KEGG" id="tpw:TPANIC_0908"/>
<dbReference type="eggNOG" id="COG0336">
    <property type="taxonomic scope" value="Bacteria"/>
</dbReference>
<dbReference type="HOGENOM" id="CLU_047363_0_1_12"/>
<dbReference type="OrthoDB" id="9807416at2"/>
<dbReference type="Proteomes" id="UP000000811">
    <property type="component" value="Chromosome"/>
</dbReference>
<dbReference type="GO" id="GO:0005829">
    <property type="term" value="C:cytosol"/>
    <property type="evidence" value="ECO:0007669"/>
    <property type="project" value="TreeGrafter"/>
</dbReference>
<dbReference type="GO" id="GO:0052906">
    <property type="term" value="F:tRNA (guanine(37)-N1)-methyltransferase activity"/>
    <property type="evidence" value="ECO:0007669"/>
    <property type="project" value="UniProtKB-UniRule"/>
</dbReference>
<dbReference type="GO" id="GO:0002939">
    <property type="term" value="P:tRNA N1-guanine methylation"/>
    <property type="evidence" value="ECO:0007669"/>
    <property type="project" value="TreeGrafter"/>
</dbReference>
<dbReference type="CDD" id="cd18080">
    <property type="entry name" value="TrmD-like"/>
    <property type="match status" value="1"/>
</dbReference>
<dbReference type="FunFam" id="3.40.1280.10:FF:000001">
    <property type="entry name" value="tRNA (guanine-N(1)-)-methyltransferase"/>
    <property type="match status" value="1"/>
</dbReference>
<dbReference type="Gene3D" id="3.40.1280.10">
    <property type="match status" value="1"/>
</dbReference>
<dbReference type="Gene3D" id="1.10.1270.20">
    <property type="entry name" value="tRNA(m1g37)methyltransferase, domain 2"/>
    <property type="match status" value="1"/>
</dbReference>
<dbReference type="HAMAP" id="MF_00605">
    <property type="entry name" value="TrmD"/>
    <property type="match status" value="1"/>
</dbReference>
<dbReference type="InterPro" id="IPR029028">
    <property type="entry name" value="Alpha/beta_knot_MTases"/>
</dbReference>
<dbReference type="InterPro" id="IPR023148">
    <property type="entry name" value="tRNA_m1G_MeTrfase_C_sf"/>
</dbReference>
<dbReference type="InterPro" id="IPR002649">
    <property type="entry name" value="tRNA_m1G_MeTrfase_TrmD"/>
</dbReference>
<dbReference type="InterPro" id="IPR029026">
    <property type="entry name" value="tRNA_m1G_MTases_N"/>
</dbReference>
<dbReference type="InterPro" id="IPR016009">
    <property type="entry name" value="tRNA_MeTrfase_TRMD/TRM10"/>
</dbReference>
<dbReference type="NCBIfam" id="NF000648">
    <property type="entry name" value="PRK00026.1"/>
    <property type="match status" value="1"/>
</dbReference>
<dbReference type="NCBIfam" id="TIGR00088">
    <property type="entry name" value="trmD"/>
    <property type="match status" value="1"/>
</dbReference>
<dbReference type="PANTHER" id="PTHR46417">
    <property type="entry name" value="TRNA (GUANINE-N(1)-)-METHYLTRANSFERASE"/>
    <property type="match status" value="1"/>
</dbReference>
<dbReference type="PANTHER" id="PTHR46417:SF1">
    <property type="entry name" value="TRNA (GUANINE-N(1)-)-METHYLTRANSFERASE"/>
    <property type="match status" value="1"/>
</dbReference>
<dbReference type="Pfam" id="PF01746">
    <property type="entry name" value="tRNA_m1G_MT"/>
    <property type="match status" value="1"/>
</dbReference>
<dbReference type="PIRSF" id="PIRSF000386">
    <property type="entry name" value="tRNA_mtase"/>
    <property type="match status" value="1"/>
</dbReference>
<dbReference type="SUPFAM" id="SSF75217">
    <property type="entry name" value="alpha/beta knot"/>
    <property type="match status" value="1"/>
</dbReference>
<comment type="function">
    <text evidence="1">Specifically methylates guanosine-37 in various tRNAs.</text>
</comment>
<comment type="catalytic activity">
    <reaction>
        <text>guanosine(37) in tRNA + S-adenosyl-L-methionine = N(1)-methylguanosine(37) in tRNA + S-adenosyl-L-homocysteine + H(+)</text>
        <dbReference type="Rhea" id="RHEA:36899"/>
        <dbReference type="Rhea" id="RHEA-COMP:10145"/>
        <dbReference type="Rhea" id="RHEA-COMP:10147"/>
        <dbReference type="ChEBI" id="CHEBI:15378"/>
        <dbReference type="ChEBI" id="CHEBI:57856"/>
        <dbReference type="ChEBI" id="CHEBI:59789"/>
        <dbReference type="ChEBI" id="CHEBI:73542"/>
        <dbReference type="ChEBI" id="CHEBI:74269"/>
        <dbReference type="EC" id="2.1.1.228"/>
    </reaction>
</comment>
<comment type="subunit">
    <text evidence="1">Homodimer.</text>
</comment>
<comment type="subcellular location">
    <subcellularLocation>
        <location evidence="2">Cytoplasm</location>
    </subcellularLocation>
</comment>
<comment type="similarity">
    <text evidence="2">Belongs to the RNA methyltransferase TrmD family.</text>
</comment>
<protein>
    <recommendedName>
        <fullName>tRNA (guanine-N(1)-)-methyltransferase</fullName>
        <ecNumber>2.1.1.228</ecNumber>
    </recommendedName>
    <alternativeName>
        <fullName>M1G-methyltransferase</fullName>
    </alternativeName>
    <alternativeName>
        <fullName>tRNA [GM37] methyltransferase</fullName>
    </alternativeName>
</protein>